<dbReference type="EMBL" id="U19104">
    <property type="protein sequence ID" value="AAB67272.1"/>
    <property type="molecule type" value="Genomic_DNA"/>
</dbReference>
<dbReference type="EMBL" id="BK006945">
    <property type="protein sequence ID" value="DAA09687.1"/>
    <property type="molecule type" value="Genomic_DNA"/>
</dbReference>
<dbReference type="PIR" id="S51473">
    <property type="entry name" value="S51473"/>
</dbReference>
<dbReference type="RefSeq" id="NP_013490.3">
    <property type="nucleotide sequence ID" value="NM_001182275.3"/>
</dbReference>
<dbReference type="BioGRID" id="31645">
    <property type="interactions" value="373"/>
</dbReference>
<dbReference type="ComplexPortal" id="CPX-3088">
    <property type="entry name" value="PAS complex"/>
</dbReference>
<dbReference type="DIP" id="DIP-1176N"/>
<dbReference type="FunCoup" id="Q06708">
    <property type="interactions" value="1012"/>
</dbReference>
<dbReference type="IntAct" id="Q06708">
    <property type="interactions" value="34"/>
</dbReference>
<dbReference type="MINT" id="Q06708"/>
<dbReference type="STRING" id="4932.YLR386W"/>
<dbReference type="iPTMnet" id="Q06708"/>
<dbReference type="PaxDb" id="4932-YLR386W"/>
<dbReference type="PeptideAtlas" id="Q06708"/>
<dbReference type="EnsemblFungi" id="YLR386W_mRNA">
    <property type="protein sequence ID" value="YLR386W"/>
    <property type="gene ID" value="YLR386W"/>
</dbReference>
<dbReference type="GeneID" id="851102"/>
<dbReference type="KEGG" id="sce:YLR386W"/>
<dbReference type="AGR" id="SGD:S000004378"/>
<dbReference type="SGD" id="S000004378">
    <property type="gene designation" value="VAC14"/>
</dbReference>
<dbReference type="VEuPathDB" id="FungiDB:YLR386W"/>
<dbReference type="eggNOG" id="KOG0212">
    <property type="taxonomic scope" value="Eukaryota"/>
</dbReference>
<dbReference type="GeneTree" id="ENSGT00390000008385"/>
<dbReference type="HOGENOM" id="CLU_007740_0_0_1"/>
<dbReference type="InParanoid" id="Q06708"/>
<dbReference type="OMA" id="QCYQHVS"/>
<dbReference type="OrthoDB" id="5574975at2759"/>
<dbReference type="BioCyc" id="MetaCyc:G3O-32452-MONOMER"/>
<dbReference type="BioCyc" id="YEAST:G3O-32452-MONOMER"/>
<dbReference type="BioGRID-ORCS" id="851102">
    <property type="hits" value="0 hits in 10 CRISPR screens"/>
</dbReference>
<dbReference type="PRO" id="PR:Q06708"/>
<dbReference type="Proteomes" id="UP000002311">
    <property type="component" value="Chromosome XII"/>
</dbReference>
<dbReference type="RNAct" id="Q06708">
    <property type="molecule type" value="protein"/>
</dbReference>
<dbReference type="GO" id="GO:0010008">
    <property type="term" value="C:endosome membrane"/>
    <property type="evidence" value="ECO:0000318"/>
    <property type="project" value="GO_Central"/>
</dbReference>
<dbReference type="GO" id="GO:0000329">
    <property type="term" value="C:fungal-type vacuole membrane"/>
    <property type="evidence" value="ECO:0000314"/>
    <property type="project" value="SGD"/>
</dbReference>
<dbReference type="GO" id="GO:0070772">
    <property type="term" value="C:PAS complex"/>
    <property type="evidence" value="ECO:0000314"/>
    <property type="project" value="SGD"/>
</dbReference>
<dbReference type="GO" id="GO:0042802">
    <property type="term" value="F:identical protein binding"/>
    <property type="evidence" value="ECO:0000353"/>
    <property type="project" value="IntAct"/>
</dbReference>
<dbReference type="GO" id="GO:0030674">
    <property type="term" value="F:protein-macromolecule adaptor activity"/>
    <property type="evidence" value="ECO:0000314"/>
    <property type="project" value="SGD"/>
</dbReference>
<dbReference type="GO" id="GO:1903100">
    <property type="term" value="P:1-phosphatidyl-1D-myo-inositol 3,5-bisphosphate metabolic process"/>
    <property type="evidence" value="ECO:0000303"/>
    <property type="project" value="ComplexPortal"/>
</dbReference>
<dbReference type="GO" id="GO:0071474">
    <property type="term" value="P:cellular hyperosmotic response"/>
    <property type="evidence" value="ECO:0000315"/>
    <property type="project" value="SGD"/>
</dbReference>
<dbReference type="GO" id="GO:0006661">
    <property type="term" value="P:phosphatidylinositol biosynthetic process"/>
    <property type="evidence" value="ECO:0000315"/>
    <property type="project" value="SGD"/>
</dbReference>
<dbReference type="GO" id="GO:0042327">
    <property type="term" value="P:positive regulation of phosphorylation"/>
    <property type="evidence" value="ECO:0000315"/>
    <property type="project" value="SGD"/>
</dbReference>
<dbReference type="GO" id="GO:1903778">
    <property type="term" value="P:protein localization to vacuolar membrane"/>
    <property type="evidence" value="ECO:0000315"/>
    <property type="project" value="SGD"/>
</dbReference>
<dbReference type="GO" id="GO:0015031">
    <property type="term" value="P:protein transport"/>
    <property type="evidence" value="ECO:0007669"/>
    <property type="project" value="UniProtKB-KW"/>
</dbReference>
<dbReference type="GO" id="GO:0010511">
    <property type="term" value="P:regulation of phosphatidylinositol biosynthetic process"/>
    <property type="evidence" value="ECO:0000303"/>
    <property type="project" value="ComplexPortal"/>
</dbReference>
<dbReference type="FunFam" id="1.25.10.10:FF:000738">
    <property type="entry name" value="VAC14p Enzyme regulator"/>
    <property type="match status" value="1"/>
</dbReference>
<dbReference type="FunFam" id="1.25.10.10:FF:000739">
    <property type="entry name" value="VAC14p Enzyme regulator"/>
    <property type="match status" value="1"/>
</dbReference>
<dbReference type="Gene3D" id="1.25.10.10">
    <property type="entry name" value="Leucine-rich Repeat Variant"/>
    <property type="match status" value="3"/>
</dbReference>
<dbReference type="InterPro" id="IPR011989">
    <property type="entry name" value="ARM-like"/>
</dbReference>
<dbReference type="InterPro" id="IPR016024">
    <property type="entry name" value="ARM-type_fold"/>
</dbReference>
<dbReference type="InterPro" id="IPR021133">
    <property type="entry name" value="HEAT_type_2"/>
</dbReference>
<dbReference type="InterPro" id="IPR026825">
    <property type="entry name" value="Vac14"/>
</dbReference>
<dbReference type="InterPro" id="IPR021841">
    <property type="entry name" value="VAC14_Fig4p-bd"/>
</dbReference>
<dbReference type="PANTHER" id="PTHR16023:SF0">
    <property type="entry name" value="PROTEIN VAC14 HOMOLOG"/>
    <property type="match status" value="1"/>
</dbReference>
<dbReference type="PANTHER" id="PTHR16023">
    <property type="entry name" value="TAX1 BINDING PROTEIN-RELATED"/>
    <property type="match status" value="1"/>
</dbReference>
<dbReference type="Pfam" id="PF12755">
    <property type="entry name" value="Vac14_Fab1_bd"/>
    <property type="match status" value="1"/>
</dbReference>
<dbReference type="Pfam" id="PF11916">
    <property type="entry name" value="Vac14_Fig4_bd"/>
    <property type="match status" value="1"/>
</dbReference>
<dbReference type="SUPFAM" id="SSF48371">
    <property type="entry name" value="ARM repeat"/>
    <property type="match status" value="1"/>
</dbReference>
<dbReference type="PROSITE" id="PS50077">
    <property type="entry name" value="HEAT_REPEAT"/>
    <property type="match status" value="1"/>
</dbReference>
<proteinExistence type="evidence at protein level"/>
<protein>
    <recommendedName>
        <fullName>Vacuole morphology and inheritance protein 14</fullName>
    </recommendedName>
    <alternativeName>
        <fullName>Swollen vacuole phenotype 2 protein</fullName>
    </alternativeName>
</protein>
<reference key="1">
    <citation type="journal article" date="1997" name="Nature">
        <title>The nucleotide sequence of Saccharomyces cerevisiae chromosome XII.</title>
        <authorList>
            <person name="Johnston M."/>
            <person name="Hillier L.W."/>
            <person name="Riles L."/>
            <person name="Albermann K."/>
            <person name="Andre B."/>
            <person name="Ansorge W."/>
            <person name="Benes V."/>
            <person name="Brueckner M."/>
            <person name="Delius H."/>
            <person name="Dubois E."/>
            <person name="Duesterhoeft A."/>
            <person name="Entian K.-D."/>
            <person name="Floeth M."/>
            <person name="Goffeau A."/>
            <person name="Hebling U."/>
            <person name="Heumann K."/>
            <person name="Heuss-Neitzel D."/>
            <person name="Hilbert H."/>
            <person name="Hilger F."/>
            <person name="Kleine K."/>
            <person name="Koetter P."/>
            <person name="Louis E.J."/>
            <person name="Messenguy F."/>
            <person name="Mewes H.-W."/>
            <person name="Miosga T."/>
            <person name="Moestl D."/>
            <person name="Mueller-Auer S."/>
            <person name="Nentwich U."/>
            <person name="Obermaier B."/>
            <person name="Piravandi E."/>
            <person name="Pohl T.M."/>
            <person name="Portetelle D."/>
            <person name="Purnelle B."/>
            <person name="Rechmann S."/>
            <person name="Rieger M."/>
            <person name="Rinke M."/>
            <person name="Rose M."/>
            <person name="Scharfe M."/>
            <person name="Scherens B."/>
            <person name="Scholler P."/>
            <person name="Schwager C."/>
            <person name="Schwarz S."/>
            <person name="Underwood A.P."/>
            <person name="Urrestarazu L.A."/>
            <person name="Vandenbol M."/>
            <person name="Verhasselt P."/>
            <person name="Vierendeels F."/>
            <person name="Voet M."/>
            <person name="Volckaert G."/>
            <person name="Voss H."/>
            <person name="Wambutt R."/>
            <person name="Wedler E."/>
            <person name="Wedler H."/>
            <person name="Zimmermann F.K."/>
            <person name="Zollner A."/>
            <person name="Hani J."/>
            <person name="Hoheisel J.D."/>
        </authorList>
    </citation>
    <scope>NUCLEOTIDE SEQUENCE [LARGE SCALE GENOMIC DNA]</scope>
    <source>
        <strain>ATCC 204508 / S288c</strain>
    </source>
</reference>
<reference key="2">
    <citation type="journal article" date="2014" name="G3 (Bethesda)">
        <title>The reference genome sequence of Saccharomyces cerevisiae: Then and now.</title>
        <authorList>
            <person name="Engel S.R."/>
            <person name="Dietrich F.S."/>
            <person name="Fisk D.G."/>
            <person name="Binkley G."/>
            <person name="Balakrishnan R."/>
            <person name="Costanzo M.C."/>
            <person name="Dwight S.S."/>
            <person name="Hitz B.C."/>
            <person name="Karra K."/>
            <person name="Nash R.S."/>
            <person name="Weng S."/>
            <person name="Wong E.D."/>
            <person name="Lloyd P."/>
            <person name="Skrzypek M.S."/>
            <person name="Miyasato S.R."/>
            <person name="Simison M."/>
            <person name="Cherry J.M."/>
        </authorList>
    </citation>
    <scope>GENOME REANNOTATION</scope>
    <source>
        <strain>ATCC 204508 / S288c</strain>
    </source>
</reference>
<reference key="3">
    <citation type="journal article" date="2002" name="J. Cell Biol.">
        <title>Osmotic stress-induced increase of phosphatidylinositol 3,5-bisphosphate requires Vac14p, an activator of the lipid kinase Fab1p.</title>
        <authorList>
            <person name="Bonangelino C.J."/>
            <person name="Nau J.J."/>
            <person name="Duex J.E."/>
            <person name="Brinkman M."/>
            <person name="Wurmser A.E."/>
            <person name="Gary J.D."/>
            <person name="Emr S.D."/>
            <person name="Weisman L.S."/>
        </authorList>
    </citation>
    <scope>PARTIAL NUCLEOTIDE SEQUENCE [GENOMIC DNA]</scope>
    <scope>FUNCTION</scope>
    <scope>SUBCELLULAR LOCATION</scope>
</reference>
<reference key="4">
    <citation type="journal article" date="2002" name="Curr. Biol.">
        <title>Vac14 controls PtdIns(3,5)P(2) synthesis and Fab1-dependent protein trafficking to the multivesicular body.</title>
        <authorList>
            <person name="Dove S.K."/>
            <person name="McEwen R.K."/>
            <person name="Mayes A."/>
            <person name="Hughes D.C."/>
            <person name="Beggs J.D."/>
            <person name="Michell R.H."/>
        </authorList>
    </citation>
    <scope>FUNCTION</scope>
    <scope>INTERACTION WITH YDR466W; YGR241C; YLR093C; VAC14; FIG4 AND YPR029C</scope>
</reference>
<reference key="5">
    <citation type="journal article" date="2003" name="Nature">
        <title>Global analysis of protein localization in budding yeast.</title>
        <authorList>
            <person name="Huh W.-K."/>
            <person name="Falvo J.V."/>
            <person name="Gerke L.C."/>
            <person name="Carroll A.S."/>
            <person name="Howson R.W."/>
            <person name="Weissman J.S."/>
            <person name="O'Shea E.K."/>
        </authorList>
    </citation>
    <scope>SUBCELLULAR LOCATION [LARGE SCALE ANALYSIS]</scope>
</reference>
<reference key="6">
    <citation type="journal article" date="2003" name="Nature">
        <title>Global analysis of protein expression in yeast.</title>
        <authorList>
            <person name="Ghaemmaghami S."/>
            <person name="Huh W.-K."/>
            <person name="Bower K."/>
            <person name="Howson R.W."/>
            <person name="Belle A."/>
            <person name="Dephoure N."/>
            <person name="O'Shea E.K."/>
            <person name="Weissman J.S."/>
        </authorList>
    </citation>
    <scope>LEVEL OF PROTEIN EXPRESSION [LARGE SCALE ANALYSIS]</scope>
</reference>
<reference key="7">
    <citation type="journal article" date="2004" name="Mol. Biol. Cell">
        <title>Vacuole size control: regulation of PtdIns(3,5)P2 levels by the vacuole-associated Vac14-Fig4 complex, a PtdIns(3,5)P2-specific phosphatase.</title>
        <authorList>
            <person name="Rudge S.A."/>
            <person name="Anderson D.M."/>
            <person name="Emr S.D."/>
        </authorList>
    </citation>
    <scope>FUNCTION</scope>
    <scope>INTERACTION WITH FIG4</scope>
    <scope>SUBCELLULAR LOCATION</scope>
</reference>
<reference key="8">
    <citation type="journal article" date="2006" name="J. Cell Biol.">
        <title>The Vac14p-Fig4p complex acts independently of Vac7p and couples PI3,5P2 synthesis and turnover.</title>
        <authorList>
            <person name="Duex J.E."/>
            <person name="Tang F."/>
            <person name="Weisman L.S."/>
        </authorList>
    </citation>
    <scope>FUNCTION</scope>
</reference>
<reference key="9">
    <citation type="journal article" date="2008" name="EMBO J.">
        <title>VAC14 nucleates a protein complex essential for the acute interconversion of PI3P and PI(3,5)P(2) in yeast and mouse.</title>
        <authorList>
            <person name="Jin N."/>
            <person name="Chow C.Y."/>
            <person name="Liu L."/>
            <person name="Zolov S.N."/>
            <person name="Bronson R."/>
            <person name="Davisson M."/>
            <person name="Petersen J.L."/>
            <person name="Zhang Y."/>
            <person name="Park S."/>
            <person name="Duex J.E."/>
            <person name="Goldowitz D."/>
            <person name="Meisler M.H."/>
            <person name="Weisman L.S."/>
        </authorList>
    </citation>
    <scope>IDENTIFICATION IN THE PI(3,5)P2 REGULATORY COMPLEX</scope>
    <scope>FUNCTION</scope>
    <scope>SUBCELLULAR LOCATION</scope>
    <scope>DOMAIN</scope>
    <scope>MUTAGENESIS OF HIS-56; ARG-61; GLN-101 AND LEU-149</scope>
</reference>
<reference key="10">
    <citation type="journal article" date="2008" name="Mol. Biol. Cell">
        <title>Assembly of a Fab1 phosphoinositide kinase signaling complex requires the Fig4 phosphoinositide phosphatase.</title>
        <authorList>
            <person name="Botelho R.J."/>
            <person name="Efe J.A."/>
            <person name="Teis D."/>
            <person name="Emr S.D."/>
        </authorList>
    </citation>
    <scope>IDENTIFICATION IN THE PI(3,5)P2 REGULATORY COMPLEX</scope>
    <scope>SUBCELLULAR LOCATION</scope>
</reference>
<reference key="11">
    <citation type="journal article" date="2008" name="Mol. Cell. Proteomics">
        <title>A multidimensional chromatography technology for in-depth phosphoproteome analysis.</title>
        <authorList>
            <person name="Albuquerque C.P."/>
            <person name="Smolka M.B."/>
            <person name="Payne S.H."/>
            <person name="Bafna V."/>
            <person name="Eng J."/>
            <person name="Zhou H."/>
        </authorList>
    </citation>
    <scope>PHOSPHORYLATION [LARGE SCALE ANALYSIS] AT SER-867</scope>
    <scope>IDENTIFICATION BY MASS SPECTROMETRY [LARGE SCALE ANALYSIS]</scope>
</reference>
<reference key="12">
    <citation type="journal article" date="2009" name="Science">
        <title>Global analysis of Cdk1 substrate phosphorylation sites provides insights into evolution.</title>
        <authorList>
            <person name="Holt L.J."/>
            <person name="Tuch B.B."/>
            <person name="Villen J."/>
            <person name="Johnson A.D."/>
            <person name="Gygi S.P."/>
            <person name="Morgan D.O."/>
        </authorList>
    </citation>
    <scope>PHOSPHORYLATION [LARGE SCALE ANALYSIS] AT SER-767 AND SER-805</scope>
    <scope>IDENTIFICATION BY MASS SPECTROMETRY [LARGE SCALE ANALYSIS]</scope>
</reference>
<reference key="13">
    <citation type="journal article" date="2012" name="Proc. Natl. Acad. Sci. U.S.A.">
        <title>N-terminal acetylome analyses and functional insights of the N-terminal acetyltransferase NatB.</title>
        <authorList>
            <person name="Van Damme P."/>
            <person name="Lasa M."/>
            <person name="Polevoda B."/>
            <person name="Gazquez C."/>
            <person name="Elosegui-Artola A."/>
            <person name="Kim D.S."/>
            <person name="De Juan-Pardo E."/>
            <person name="Demeyer K."/>
            <person name="Hole K."/>
            <person name="Larrea E."/>
            <person name="Timmerman E."/>
            <person name="Prieto J."/>
            <person name="Arnesen T."/>
            <person name="Sherman F."/>
            <person name="Gevaert K."/>
            <person name="Aldabe R."/>
        </authorList>
    </citation>
    <scope>IDENTIFICATION BY MASS SPECTROMETRY [LARGE SCALE ANALYSIS]</scope>
</reference>
<evidence type="ECO:0000256" key="1">
    <source>
        <dbReference type="SAM" id="MobiDB-lite"/>
    </source>
</evidence>
<evidence type="ECO:0000269" key="2">
    <source>
    </source>
</evidence>
<evidence type="ECO:0000269" key="3">
    <source>
    </source>
</evidence>
<evidence type="ECO:0000269" key="4">
    <source>
    </source>
</evidence>
<evidence type="ECO:0000269" key="5">
    <source>
    </source>
</evidence>
<evidence type="ECO:0000269" key="6">
    <source>
    </source>
</evidence>
<evidence type="ECO:0000269" key="7">
    <source>
    </source>
</evidence>
<evidence type="ECO:0000269" key="8">
    <source>
    </source>
</evidence>
<evidence type="ECO:0000269" key="9">
    <source>
    </source>
</evidence>
<evidence type="ECO:0000305" key="10"/>
<evidence type="ECO:0007744" key="11">
    <source>
    </source>
</evidence>
<evidence type="ECO:0007744" key="12">
    <source>
    </source>
</evidence>
<sequence>MEKSIAKGLSDKLYEKRKAAALELEKLVKQCVLEGDYDRIDKIIDELCRDYAYALHQPMARNAGLMGLAATAIALGINDVGRYLRNILPPVLACFGDQNDQVRFYACESLYNIAKIAKGEILVYFNEIFDVLCKISADTENSVRGAAELLDRLIKDIVAERASNYISIVNNGSHGLLPAIKTDPISGDVYQEEYEQDNQLAFSLPKFIPLLTERIYAINPDTRVFLVDWLKVLLNTPGLELISYLPSFLGGLFTFLGDSHKDVRTVTHTLMDSLLHEVDRISKLQTEIKMKRLERLKMLEDKYNNSSTPTKKADGALIAEKKKTLMTALGGLSKPLSMETDDTKLSNTNETDDERHLTSQEQLLDSEATSQEPLRDGEEYIPGQDINLNFPEVITVLVNNLASSEAEIQLIALHWIQVILSISPNVFIPFLSKILSVLLKLLSDSDPHITEIAQLVNGQLLSLCSSYVGKETDGKIAYGPIVNSLTLQFFDSRIDAKIACLDWLILIYHKAPNQILKHNDSMFLTLLKSLSNRDSVLIEKALSLLQSLCSDSNDNYLRQFLQDLLTLFKRDTKLVKTRANFIMRQISSRLSPERVYKVISSILDNYNDTTFVKMMIQILSTNLITSPEMSSLRNKLRTCEDGMFFNSLFKSWCPNPVSVISLCFVAENYELAYTVLQTYANYELKLNDLVQLDILIQLFESPVFTRMRLQLLEQQKHPFLHKCLFGILMIIPQSKAFETLNRRLNSLNIWTSQSYVMNNYIRQRENSNFCDSNSDISQRSVSQSKLHFQELINHFKAVSEEDEYSSDMIRLDHGANNKSLLLGSFLDGIDEDKQEIVTPISPMNEAINEEMESPNDNSSVILKDSGSLPFNRNVSDKLKK</sequence>
<name>VAC14_YEAST</name>
<feature type="chain" id="PRO_0000065756" description="Vacuole morphology and inheritance protein 14">
    <location>
        <begin position="1"/>
        <end position="880"/>
    </location>
</feature>
<feature type="repeat" description="HEAT 1">
    <location>
        <begin position="82"/>
        <end position="119"/>
    </location>
</feature>
<feature type="repeat" description="HEAT 2">
    <location>
        <begin position="243"/>
        <end position="280"/>
    </location>
</feature>
<feature type="repeat" description="HEAT 3">
    <location>
        <begin position="388"/>
        <end position="425"/>
    </location>
</feature>
<feature type="repeat" description="HEAT 4">
    <location>
        <begin position="429"/>
        <end position="466"/>
    </location>
</feature>
<feature type="repeat" description="HEAT 5">
    <location>
        <begin position="517"/>
        <end position="554"/>
    </location>
</feature>
<feature type="region of interest" description="Disordered" evidence="1">
    <location>
        <begin position="333"/>
        <end position="373"/>
    </location>
</feature>
<feature type="region of interest" description="Disordered" evidence="1">
    <location>
        <begin position="850"/>
        <end position="880"/>
    </location>
</feature>
<feature type="compositionally biased region" description="Polar residues" evidence="1">
    <location>
        <begin position="359"/>
        <end position="372"/>
    </location>
</feature>
<feature type="modified residue" description="Phosphoserine" evidence="12">
    <location>
        <position position="767"/>
    </location>
</feature>
<feature type="modified residue" description="Phosphoserine" evidence="12">
    <location>
        <position position="805"/>
    </location>
</feature>
<feature type="modified residue" description="Phosphoserine" evidence="11">
    <location>
        <position position="867"/>
    </location>
</feature>
<feature type="mutagenesis site" description="Loss of interaction with ATG18 and VAC7." evidence="9">
    <original>H</original>
    <variation>Y</variation>
    <location>
        <position position="56"/>
    </location>
</feature>
<feature type="mutagenesis site" description="Loss of interaction with ATG18 and VAC7." evidence="9">
    <original>R</original>
    <variation>K</variation>
    <location>
        <position position="61"/>
    </location>
</feature>
<feature type="mutagenesis site" description="Loss of interaction with ATG18 and VAC7." evidence="9">
    <original>Q</original>
    <variation>R</variation>
    <location>
        <position position="101"/>
    </location>
</feature>
<feature type="mutagenesis site" description="Loss of interaction with ATG18, FAB1 and VAC7. No loss of interaction with FIG4." evidence="9">
    <original>L</original>
    <variation>R</variation>
    <location>
        <position position="149"/>
    </location>
</feature>
<comment type="function">
    <text evidence="2 3 4 7 9">The PI(3,5)P2 regulatory complex regulates both the synthesis and turnover of phosphatidylinositol 3,5-bisphosphate (PtdIns(3,5)P2). Regulates the synthesis of PtdIns(3,5)P2 by positive activation of FAB1 and by controlling FIG4 localization. Required for FIG4-mediated turnover of PtdIns(3,5)P2 after hyperosmotic shock. Essential for the control of trafficking of some proteins to the vacuole lumen via the multivesicular body (MVB), and for maintenance of vacuole size and acidity.</text>
</comment>
<comment type="subunit">
    <text evidence="8 9">Component of the PI(3,5)P2 regulatory complex, composed of ATG18, FIG4, FAB1, VAC14 and VAC7. VAC14 nucleates the assembly of the complex and serves as a scaffold.</text>
</comment>
<comment type="interaction">
    <interactant intactId="EBI-27189">
        <id>Q06708</id>
    </interactant>
    <interactant intactId="EBI-22968">
        <id>P43601</id>
        <label>ATG18</label>
    </interactant>
    <organismsDiffer>false</organismsDiffer>
    <experiments>5</experiments>
</comment>
<comment type="interaction">
    <interactant intactId="EBI-27189">
        <id>Q06708</id>
    </interactant>
    <interactant intactId="EBI-6754">
        <id>P34756</id>
        <label>FAB1</label>
    </interactant>
    <organismsDiffer>false</organismsDiffer>
    <experiments>10</experiments>
</comment>
<comment type="interaction">
    <interactant intactId="EBI-27189">
        <id>Q06708</id>
    </interactant>
    <interactant intactId="EBI-28407">
        <id>P42837</id>
        <label>FIG4</label>
    </interactant>
    <organismsDiffer>false</organismsDiffer>
    <experiments>8</experiments>
</comment>
<comment type="interaction">
    <interactant intactId="EBI-27189">
        <id>Q06708</id>
    </interactant>
    <interactant intactId="EBI-27189">
        <id>Q06708</id>
        <label>VAC14</label>
    </interactant>
    <organismsDiffer>false</organismsDiffer>
    <experiments>4</experiments>
</comment>
<comment type="interaction">
    <interactant intactId="EBI-27189">
        <id>Q06708</id>
    </interactant>
    <interactant intactId="EBI-28714">
        <id>P53950</id>
        <label>VAC7</label>
    </interactant>
    <organismsDiffer>false</organismsDiffer>
    <experiments>4</experiments>
</comment>
<comment type="subcellular location">
    <subcellularLocation>
        <location evidence="2 4 5 8 9">Vacuole membrane</location>
        <topology evidence="2 4 5 8 9">Peripheral membrane protein</topology>
    </subcellularLocation>
    <text>Limiting membrane of the vacuole. Localization requires FAB1 and FIG4.</text>
</comment>
<comment type="domain">
    <text evidence="9">The N-terminal domain mediates interaction with FAB1 and VAC7 while the C-terminal domain mediates interaction with FIG4.</text>
</comment>
<comment type="miscellaneous">
    <text evidence="6">Present with 12388 molecules/cell in log phase SD medium.</text>
</comment>
<comment type="similarity">
    <text evidence="10">Belongs to the VAC14 family.</text>
</comment>
<keyword id="KW-0472">Membrane</keyword>
<keyword id="KW-0597">Phosphoprotein</keyword>
<keyword id="KW-0653">Protein transport</keyword>
<keyword id="KW-1185">Reference proteome</keyword>
<keyword id="KW-0677">Repeat</keyword>
<keyword id="KW-0813">Transport</keyword>
<keyword id="KW-0926">Vacuole</keyword>
<gene>
    <name type="primary">VAC14</name>
    <name type="synonym">SVP2</name>
    <name type="ordered locus">YLR386W</name>
    <name type="ORF">L3502.1</name>
</gene>
<organism>
    <name type="scientific">Saccharomyces cerevisiae (strain ATCC 204508 / S288c)</name>
    <name type="common">Baker's yeast</name>
    <dbReference type="NCBI Taxonomy" id="559292"/>
    <lineage>
        <taxon>Eukaryota</taxon>
        <taxon>Fungi</taxon>
        <taxon>Dikarya</taxon>
        <taxon>Ascomycota</taxon>
        <taxon>Saccharomycotina</taxon>
        <taxon>Saccharomycetes</taxon>
        <taxon>Saccharomycetales</taxon>
        <taxon>Saccharomycetaceae</taxon>
        <taxon>Saccharomyces</taxon>
    </lineage>
</organism>
<accession>Q06708</accession>
<accession>D6VZ21</accession>